<keyword id="KW-0068">Autocatalytic cleavage</keyword>
<keyword id="KW-0238">DNA-binding</keyword>
<keyword id="KW-0255">Endonuclease</keyword>
<keyword id="KW-0342">GTP-binding</keyword>
<keyword id="KW-0378">Hydrolase</keyword>
<keyword id="KW-0404">Intron homing</keyword>
<keyword id="KW-0436">Ligase</keyword>
<keyword id="KW-0464">Manganese</keyword>
<keyword id="KW-0479">Metal-binding</keyword>
<keyword id="KW-0540">Nuclease</keyword>
<keyword id="KW-0547">Nucleotide-binding</keyword>
<keyword id="KW-0651">Protein splicing</keyword>
<keyword id="KW-1185">Reference proteome</keyword>
<keyword id="KW-0819">tRNA processing</keyword>
<proteinExistence type="inferred from homology"/>
<evidence type="ECO:0000250" key="1">
    <source>
        <dbReference type="UniProtKB" id="O59245"/>
    </source>
</evidence>
<evidence type="ECO:0000255" key="2"/>
<evidence type="ECO:0000255" key="3">
    <source>
        <dbReference type="PROSITE-ProRule" id="PRU00273"/>
    </source>
</evidence>
<evidence type="ECO:0000305" key="4"/>
<gene>
    <name type="primary">rtcB</name>
    <name type="ordered locus">MJ0682</name>
</gene>
<dbReference type="EC" id="6.5.1.8" evidence="1"/>
<dbReference type="EC" id="3.1.-.-"/>
<dbReference type="EMBL" id="L77117">
    <property type="protein sequence ID" value="AAB98677.1"/>
    <property type="molecule type" value="Genomic_DNA"/>
</dbReference>
<dbReference type="PIR" id="B64385">
    <property type="entry name" value="B64385"/>
</dbReference>
<dbReference type="RefSeq" id="WP_010870187.1">
    <property type="nucleotide sequence ID" value="NC_000909.1"/>
</dbReference>
<dbReference type="SMR" id="Q58095"/>
<dbReference type="FunCoup" id="Q58095">
    <property type="interactions" value="116"/>
</dbReference>
<dbReference type="STRING" id="243232.MJ_0682"/>
<dbReference type="PaxDb" id="243232-MJ_0682"/>
<dbReference type="EnsemblBacteria" id="AAB98677">
    <property type="protein sequence ID" value="AAB98677"/>
    <property type="gene ID" value="MJ_0682"/>
</dbReference>
<dbReference type="GeneID" id="1451548"/>
<dbReference type="KEGG" id="mja:MJ_0682"/>
<dbReference type="eggNOG" id="arCOG03158">
    <property type="taxonomic scope" value="Archaea"/>
</dbReference>
<dbReference type="eggNOG" id="arCOG04246">
    <property type="taxonomic scope" value="Archaea"/>
</dbReference>
<dbReference type="HOGENOM" id="CLU_012374_0_0_2"/>
<dbReference type="InParanoid" id="Q58095"/>
<dbReference type="OrthoDB" id="9887at2157"/>
<dbReference type="PhylomeDB" id="Q58095"/>
<dbReference type="Proteomes" id="UP000000805">
    <property type="component" value="Chromosome"/>
</dbReference>
<dbReference type="GO" id="GO:0003677">
    <property type="term" value="F:DNA binding"/>
    <property type="evidence" value="ECO:0007669"/>
    <property type="project" value="UniProtKB-KW"/>
</dbReference>
<dbReference type="GO" id="GO:0004519">
    <property type="term" value="F:endonuclease activity"/>
    <property type="evidence" value="ECO:0007669"/>
    <property type="project" value="UniProtKB-KW"/>
</dbReference>
<dbReference type="GO" id="GO:0005525">
    <property type="term" value="F:GTP binding"/>
    <property type="evidence" value="ECO:0007669"/>
    <property type="project" value="UniProtKB-KW"/>
</dbReference>
<dbReference type="GO" id="GO:0046872">
    <property type="term" value="F:metal ion binding"/>
    <property type="evidence" value="ECO:0007669"/>
    <property type="project" value="UniProtKB-KW"/>
</dbReference>
<dbReference type="GO" id="GO:0170057">
    <property type="term" value="F:RNA ligase (GTP) activity"/>
    <property type="evidence" value="ECO:0007669"/>
    <property type="project" value="UniProtKB-EC"/>
</dbReference>
<dbReference type="GO" id="GO:0016539">
    <property type="term" value="P:intein-mediated protein splicing"/>
    <property type="evidence" value="ECO:0007669"/>
    <property type="project" value="InterPro"/>
</dbReference>
<dbReference type="GO" id="GO:0006314">
    <property type="term" value="P:intron homing"/>
    <property type="evidence" value="ECO:0007669"/>
    <property type="project" value="UniProtKB-KW"/>
</dbReference>
<dbReference type="GO" id="GO:0006388">
    <property type="term" value="P:tRNA splicing, via endonucleolytic cleavage and ligation"/>
    <property type="evidence" value="ECO:0000318"/>
    <property type="project" value="GO_Central"/>
</dbReference>
<dbReference type="CDD" id="cd00081">
    <property type="entry name" value="Hint"/>
    <property type="match status" value="2"/>
</dbReference>
<dbReference type="FunFam" id="3.10.28.10:FF:000020">
    <property type="entry name" value="tRNA-splicing ligase RtcB"/>
    <property type="match status" value="1"/>
</dbReference>
<dbReference type="FunFam" id="3.90.1860.10:FF:000007">
    <property type="entry name" value="tRNA-splicing ligase RtcB"/>
    <property type="match status" value="1"/>
</dbReference>
<dbReference type="Gene3D" id="3.10.28.10">
    <property type="entry name" value="Homing endonucleases"/>
    <property type="match status" value="1"/>
</dbReference>
<dbReference type="Gene3D" id="3.90.1860.10">
    <property type="entry name" value="tRNA-splicing ligase RtcB"/>
    <property type="match status" value="2"/>
</dbReference>
<dbReference type="InterPro" id="IPR003586">
    <property type="entry name" value="Hint_dom_C"/>
</dbReference>
<dbReference type="InterPro" id="IPR003587">
    <property type="entry name" value="Hint_dom_N"/>
</dbReference>
<dbReference type="InterPro" id="IPR036844">
    <property type="entry name" value="Hint_dom_sf"/>
</dbReference>
<dbReference type="InterPro" id="IPR027434">
    <property type="entry name" value="Homing_endonucl"/>
</dbReference>
<dbReference type="InterPro" id="IPR006142">
    <property type="entry name" value="INTEIN"/>
</dbReference>
<dbReference type="InterPro" id="IPR030934">
    <property type="entry name" value="Intein_C"/>
</dbReference>
<dbReference type="InterPro" id="IPR004042">
    <property type="entry name" value="Intein_endonuc_central"/>
</dbReference>
<dbReference type="InterPro" id="IPR006141">
    <property type="entry name" value="Intein_N"/>
</dbReference>
<dbReference type="InterPro" id="IPR004860">
    <property type="entry name" value="LAGLIDADG_dom"/>
</dbReference>
<dbReference type="InterPro" id="IPR001233">
    <property type="entry name" value="RtcB"/>
</dbReference>
<dbReference type="InterPro" id="IPR036025">
    <property type="entry name" value="RtcB-like_sf"/>
</dbReference>
<dbReference type="InterPro" id="IPR053454">
    <property type="entry name" value="RtcB_ligase"/>
</dbReference>
<dbReference type="NCBIfam" id="TIGR01443">
    <property type="entry name" value="intein_Cterm"/>
    <property type="match status" value="1"/>
</dbReference>
<dbReference type="NCBIfam" id="TIGR01445">
    <property type="entry name" value="intein_Nterm"/>
    <property type="match status" value="1"/>
</dbReference>
<dbReference type="NCBIfam" id="NF038162">
    <property type="entry name" value="RctB_rel_intein"/>
    <property type="match status" value="1"/>
</dbReference>
<dbReference type="PANTHER" id="PTHR11118">
    <property type="entry name" value="RNA-SPLICING LIGASE RTCB HOMOLOG"/>
    <property type="match status" value="1"/>
</dbReference>
<dbReference type="PANTHER" id="PTHR11118:SF1">
    <property type="entry name" value="RNA-SPLICING LIGASE RTCB HOMOLOG"/>
    <property type="match status" value="1"/>
</dbReference>
<dbReference type="Pfam" id="PF14890">
    <property type="entry name" value="Intein_splicing"/>
    <property type="match status" value="1"/>
</dbReference>
<dbReference type="Pfam" id="PF14528">
    <property type="entry name" value="LAGLIDADG_3"/>
    <property type="match status" value="1"/>
</dbReference>
<dbReference type="Pfam" id="PF01139">
    <property type="entry name" value="RtcB"/>
    <property type="match status" value="2"/>
</dbReference>
<dbReference type="PRINTS" id="PR00379">
    <property type="entry name" value="INTEIN"/>
</dbReference>
<dbReference type="SMART" id="SM00305">
    <property type="entry name" value="HintC"/>
    <property type="match status" value="1"/>
</dbReference>
<dbReference type="SMART" id="SM00306">
    <property type="entry name" value="HintN"/>
    <property type="match status" value="1"/>
</dbReference>
<dbReference type="SUPFAM" id="SSF51294">
    <property type="entry name" value="Hedgehog/intein (Hint) domain"/>
    <property type="match status" value="1"/>
</dbReference>
<dbReference type="SUPFAM" id="SSF55608">
    <property type="entry name" value="Homing endonucleases"/>
    <property type="match status" value="1"/>
</dbReference>
<dbReference type="SUPFAM" id="SSF103365">
    <property type="entry name" value="Hypothetical protein PH1602"/>
    <property type="match status" value="2"/>
</dbReference>
<dbReference type="PROSITE" id="PS50818">
    <property type="entry name" value="INTEIN_C_TER"/>
    <property type="match status" value="1"/>
</dbReference>
<dbReference type="PROSITE" id="PS50819">
    <property type="entry name" value="INTEIN_ENDONUCLEASE"/>
    <property type="match status" value="1"/>
</dbReference>
<dbReference type="PROSITE" id="PS50817">
    <property type="entry name" value="INTEIN_N_TER"/>
    <property type="match status" value="1"/>
</dbReference>
<dbReference type="PROSITE" id="PS01288">
    <property type="entry name" value="UPF0027"/>
    <property type="match status" value="1"/>
</dbReference>
<accession>Q58095</accession>
<comment type="function">
    <text evidence="1">Essential for tRNA splicing and maturation. Acts by directly joining spliced tRNA halves to mature-sized tRNAs. Joins RNA with 2',3'-cyclic-phosphate or 3'-phosphate ends to RNA with 5'-hydroxy ends.</text>
</comment>
<comment type="catalytic activity">
    <reaction evidence="1">
        <text>a 3'-end 3'-phospho-ribonucleotide-RNA + a 5'-end dephospho-ribonucleoside-RNA + GTP = a ribonucleotidyl-ribonucleotide-RNA + GMP + diphosphate</text>
        <dbReference type="Rhea" id="RHEA:68076"/>
        <dbReference type="Rhea" id="RHEA-COMP:10463"/>
        <dbReference type="Rhea" id="RHEA-COMP:13936"/>
        <dbReference type="Rhea" id="RHEA-COMP:17355"/>
        <dbReference type="ChEBI" id="CHEBI:33019"/>
        <dbReference type="ChEBI" id="CHEBI:37565"/>
        <dbReference type="ChEBI" id="CHEBI:58115"/>
        <dbReference type="ChEBI" id="CHEBI:83062"/>
        <dbReference type="ChEBI" id="CHEBI:138284"/>
        <dbReference type="ChEBI" id="CHEBI:173118"/>
        <dbReference type="EC" id="6.5.1.8"/>
    </reaction>
</comment>
<comment type="catalytic activity">
    <reaction evidence="1">
        <text>a 3'-end 2',3'-cyclophospho-ribonucleotide-RNA + a 5'-end dephospho-ribonucleoside-RNA + GTP + H2O = a ribonucleotidyl-ribonucleotide-RNA + GMP + diphosphate + H(+)</text>
        <dbReference type="Rhea" id="RHEA:68080"/>
        <dbReference type="Rhea" id="RHEA-COMP:10464"/>
        <dbReference type="Rhea" id="RHEA-COMP:13936"/>
        <dbReference type="Rhea" id="RHEA-COMP:17355"/>
        <dbReference type="ChEBI" id="CHEBI:15377"/>
        <dbReference type="ChEBI" id="CHEBI:15378"/>
        <dbReference type="ChEBI" id="CHEBI:33019"/>
        <dbReference type="ChEBI" id="CHEBI:37565"/>
        <dbReference type="ChEBI" id="CHEBI:58115"/>
        <dbReference type="ChEBI" id="CHEBI:83064"/>
        <dbReference type="ChEBI" id="CHEBI:138284"/>
        <dbReference type="ChEBI" id="CHEBI:173118"/>
        <dbReference type="EC" id="6.5.1.8"/>
    </reaction>
</comment>
<comment type="cofactor">
    <cofactor evidence="1">
        <name>Mn(2+)</name>
        <dbReference type="ChEBI" id="CHEBI:29035"/>
    </cofactor>
    <text evidence="1">Binds 2 manganese ions per subunit.</text>
</comment>
<comment type="subunit">
    <text evidence="1">Monomer.</text>
</comment>
<comment type="miscellaneous">
    <text evidence="1">Ligation proceeds through 3 nucleotidyl transfer steps, with 2',3'-cyclic phosphate termini being hydrolyzed to 3'-P termini in a step that precedes 3'-P activation with GMP. In the first nucleotidyl transfer step, RtcB reacts with GTP to form a covalent RtcB-histidine-GMP intermediate with release of PPi; in the second step, the GMP moiety is transferred to the RNA 3'-P; in the third step, the 5'-OH from the opposite RNA strand attacks the activated 3'-P to form a 3',5'-phosphodiester bond and release GMP.</text>
</comment>
<comment type="similarity">
    <text evidence="4">Belongs to the RtcB family.</text>
</comment>
<protein>
    <recommendedName>
        <fullName evidence="1">tRNA-splicing ligase RtcB</fullName>
        <ecNumber evidence="1">6.5.1.8</ecNumber>
    </recommendedName>
    <alternativeName>
        <fullName evidence="1">3'-phosphate/5'-hydroxy nucleic acid ligase</fullName>
    </alternativeName>
    <component>
        <recommendedName>
            <fullName>Mja hyp2 intein</fullName>
            <ecNumber>3.1.-.-</ecNumber>
        </recommendedName>
    </component>
</protein>
<organism>
    <name type="scientific">Methanocaldococcus jannaschii (strain ATCC 43067 / DSM 2661 / JAL-1 / JCM 10045 / NBRC 100440)</name>
    <name type="common">Methanococcus jannaschii</name>
    <dbReference type="NCBI Taxonomy" id="243232"/>
    <lineage>
        <taxon>Archaea</taxon>
        <taxon>Methanobacteriati</taxon>
        <taxon>Methanobacteriota</taxon>
        <taxon>Methanomada group</taxon>
        <taxon>Methanococci</taxon>
        <taxon>Methanococcales</taxon>
        <taxon>Methanocaldococcaceae</taxon>
        <taxon>Methanocaldococcus</taxon>
    </lineage>
</organism>
<name>RTCB_METJA</name>
<sequence length="968" mass="110206">MKDVLKRVSDVVWELPKDYKDCMRVPGRIYLNEILLDELEPEVLEQIANVACLPGIYKYSIAMPDVHYGYGFAIGGVAAFDQREGVISPGGVGFDINCLTSNSKILTDDGYYIKLEKLKEKLDLHIKIYNTEEGEKSSNILFVSERYADEKIIRIKTESGRVLEGSKDHPVLTLNGYVPMGMLKEGDDVIVYPYEGVEYEEPSDEIILDEDDFAEYDKQIIKYLKDRGLLPLRMDNKNIGIIARLLGFAFGDGSIVKENGDRERLYVAFYGKRETLIKIREDLEKLGIKASRIYSRKREVEIRNAYGDEYTSLCEDNSIKITSKAFALFMHKLGMPIGKKTEQIYKIPEWIKKAPKWVKRNFLAGLFGADGSRAVFKNYTPLPINLTMSKSEELKENILEFLNEIKLLLAEFDIESMIYEIKSLDGRVSYRLAIVGEESIKNFLGRINYEYSGEKKVIGLLAYEYLRRKDIAKEIRKKCIKRAKELYKKGVTVSEMLKMDEFRNEFISKRLIERAVYENLDEDDVRISTKFPKFEEFIEKYGVIGGFVIDKIKEIEEISYDSKLYDVGIVSKEHNFIANSIVVHNCGVRLIRTNLTKEEVQSKIKELIKTLFKNVPSGLGSKGILKFSKSVMDDVLEEGVRWAVKEGYGWKEDLEFIEEHGCLKDADASYVSDKAKERGRVQLGSLGSGNHFLEVQYVEKVFDEEAAEIYGIEENQVVVLVHTGSRGLGHQICTDYLRIMEKAAKNYGIKLPDRQLACAPFESEEGQSYFKAMCCGANYAWANRQMITHWVRESFEEVFKIHAEDLEMNIVYDVAHNIAKKEEHIIDGRKVKVIVHRKGATRAFPPKHEAIPKEYWSVGQPVIIPGDMGTASYLMRGTEIAMKETFGSTAHGAGRKLSRAKALKLWKGKEIQRRLAEMGIVAMSDSKAVMAEEAPEAYKSVDLVADTCHKAGISLKVARMRPLGVIKG</sequence>
<reference key="1">
    <citation type="journal article" date="1996" name="Science">
        <title>Complete genome sequence of the methanogenic archaeon, Methanococcus jannaschii.</title>
        <authorList>
            <person name="Bult C.J."/>
            <person name="White O."/>
            <person name="Olsen G.J."/>
            <person name="Zhou L."/>
            <person name="Fleischmann R.D."/>
            <person name="Sutton G.G."/>
            <person name="Blake J.A."/>
            <person name="FitzGerald L.M."/>
            <person name="Clayton R.A."/>
            <person name="Gocayne J.D."/>
            <person name="Kerlavage A.R."/>
            <person name="Dougherty B.A."/>
            <person name="Tomb J.-F."/>
            <person name="Adams M.D."/>
            <person name="Reich C.I."/>
            <person name="Overbeek R."/>
            <person name="Kirkness E.F."/>
            <person name="Weinstock K.G."/>
            <person name="Merrick J.M."/>
            <person name="Glodek A."/>
            <person name="Scott J.L."/>
            <person name="Geoghagen N.S.M."/>
            <person name="Weidman J.F."/>
            <person name="Fuhrmann J.L."/>
            <person name="Nguyen D."/>
            <person name="Utterback T.R."/>
            <person name="Kelley J.M."/>
            <person name="Peterson J.D."/>
            <person name="Sadow P.W."/>
            <person name="Hanna M.C."/>
            <person name="Cotton M.D."/>
            <person name="Roberts K.M."/>
            <person name="Hurst M.A."/>
            <person name="Kaine B.P."/>
            <person name="Borodovsky M."/>
            <person name="Klenk H.-P."/>
            <person name="Fraser C.M."/>
            <person name="Smith H.O."/>
            <person name="Woese C.R."/>
            <person name="Venter J.C."/>
        </authorList>
    </citation>
    <scope>NUCLEOTIDE SEQUENCE [LARGE SCALE GENOMIC DNA]</scope>
    <source>
        <strain>ATCC 43067 / DSM 2661 / JAL-1 / JCM 10045 / NBRC 100440</strain>
    </source>
</reference>
<feature type="chain" id="PRO_0000036183" description="tRNA-splicing ligase RtcB, 1st part" evidence="2">
    <location>
        <begin position="1"/>
        <end position="97"/>
    </location>
</feature>
<feature type="chain" id="PRO_0000036184" description="Mja hyp2 intein" evidence="2">
    <location>
        <begin position="98"/>
        <end position="585"/>
    </location>
</feature>
<feature type="chain" id="PRO_0000036185" description="tRNA-splicing ligase RtcB, 2nd part" evidence="2">
    <location>
        <begin position="586"/>
        <end position="968"/>
    </location>
</feature>
<feature type="domain" description="DOD-type homing endonuclease" evidence="3">
    <location>
        <begin position="245"/>
        <end position="414"/>
    </location>
</feature>
<feature type="active site" description="GMP-histidine intermediate" evidence="1">
    <location>
        <position position="891"/>
    </location>
</feature>
<feature type="binding site" evidence="1">
    <location>
        <position position="95"/>
    </location>
    <ligand>
        <name>Mn(2+)</name>
        <dbReference type="ChEBI" id="CHEBI:29035"/>
        <label>1</label>
    </ligand>
</feature>
<feature type="binding site" evidence="1">
    <location>
        <position position="586"/>
    </location>
    <ligand>
        <name>Mn(2+)</name>
        <dbReference type="ChEBI" id="CHEBI:29035"/>
        <label>1</label>
    </ligand>
</feature>
<feature type="binding site" evidence="1">
    <location>
        <position position="586"/>
    </location>
    <ligand>
        <name>Mn(2+)</name>
        <dbReference type="ChEBI" id="CHEBI:29035"/>
        <label>2</label>
    </ligand>
</feature>
<feature type="binding site" evidence="1">
    <location>
        <begin position="690"/>
        <end position="694"/>
    </location>
    <ligand>
        <name>GMP</name>
        <dbReference type="ChEBI" id="CHEBI:58115"/>
    </ligand>
</feature>
<feature type="binding site" evidence="1">
    <location>
        <position position="691"/>
    </location>
    <ligand>
        <name>Mn(2+)</name>
        <dbReference type="ChEBI" id="CHEBI:29035"/>
        <label>1</label>
    </ligand>
</feature>
<feature type="binding site" evidence="1">
    <location>
        <position position="722"/>
    </location>
    <ligand>
        <name>Mn(2+)</name>
        <dbReference type="ChEBI" id="CHEBI:29035"/>
        <label>2</label>
    </ligand>
</feature>
<feature type="binding site" evidence="1">
    <location>
        <begin position="816"/>
        <end position="817"/>
    </location>
    <ligand>
        <name>GMP</name>
        <dbReference type="ChEBI" id="CHEBI:58115"/>
    </ligand>
</feature>
<feature type="binding site" evidence="1">
    <location>
        <position position="816"/>
    </location>
    <ligand>
        <name>Mn(2+)</name>
        <dbReference type="ChEBI" id="CHEBI:29035"/>
        <label>2</label>
    </ligand>
</feature>
<feature type="binding site" evidence="1">
    <location>
        <begin position="865"/>
        <end position="868"/>
    </location>
    <ligand>
        <name>GMP</name>
        <dbReference type="ChEBI" id="CHEBI:58115"/>
    </ligand>
</feature>
<feature type="binding site" evidence="1">
    <location>
        <position position="872"/>
    </location>
    <ligand>
        <name>GMP</name>
        <dbReference type="ChEBI" id="CHEBI:58115"/>
    </ligand>
</feature>
<feature type="binding site" evidence="1">
    <location>
        <begin position="891"/>
        <end position="894"/>
    </location>
    <ligand>
        <name>GMP</name>
        <dbReference type="ChEBI" id="CHEBI:58115"/>
    </ligand>
</feature>
<feature type="binding site" evidence="1">
    <location>
        <position position="967"/>
    </location>
    <ligand>
        <name>GMP</name>
        <dbReference type="ChEBI" id="CHEBI:58115"/>
    </ligand>
</feature>